<feature type="chain" id="PRO_1000140521" description="Small ribosomal subunit protein uS8">
    <location>
        <begin position="1"/>
        <end position="131"/>
    </location>
</feature>
<reference key="1">
    <citation type="submission" date="2008-04" db="EMBL/GenBank/DDBJ databases">
        <title>Complete sequence of chromosome 1 of Burkholderia ambifaria MC40-6.</title>
        <authorList>
            <person name="Copeland A."/>
            <person name="Lucas S."/>
            <person name="Lapidus A."/>
            <person name="Glavina del Rio T."/>
            <person name="Dalin E."/>
            <person name="Tice H."/>
            <person name="Pitluck S."/>
            <person name="Chain P."/>
            <person name="Malfatti S."/>
            <person name="Shin M."/>
            <person name="Vergez L."/>
            <person name="Lang D."/>
            <person name="Schmutz J."/>
            <person name="Larimer F."/>
            <person name="Land M."/>
            <person name="Hauser L."/>
            <person name="Kyrpides N."/>
            <person name="Lykidis A."/>
            <person name="Ramette A."/>
            <person name="Konstantinidis K."/>
            <person name="Tiedje J."/>
            <person name="Richardson P."/>
        </authorList>
    </citation>
    <scope>NUCLEOTIDE SEQUENCE [LARGE SCALE GENOMIC DNA]</scope>
    <source>
        <strain>MC40-6</strain>
    </source>
</reference>
<organism>
    <name type="scientific">Burkholderia ambifaria (strain MC40-6)</name>
    <dbReference type="NCBI Taxonomy" id="398577"/>
    <lineage>
        <taxon>Bacteria</taxon>
        <taxon>Pseudomonadati</taxon>
        <taxon>Pseudomonadota</taxon>
        <taxon>Betaproteobacteria</taxon>
        <taxon>Burkholderiales</taxon>
        <taxon>Burkholderiaceae</taxon>
        <taxon>Burkholderia</taxon>
        <taxon>Burkholderia cepacia complex</taxon>
    </lineage>
</organism>
<sequence>MSMSDPIADMLTRIRNAQMVEKVSVAMPSSKVKVAIAQVLKDEGYIDDFAVKAEGAKSELNIALKYYAGRPVIERLERVSKPGLRVYRGRNDIPQVMNGLGVAIVSTPKGVMTDRKARATGVGGEVICYVA</sequence>
<dbReference type="EMBL" id="CP001025">
    <property type="protein sequence ID" value="ACB62791.1"/>
    <property type="molecule type" value="Genomic_DNA"/>
</dbReference>
<dbReference type="RefSeq" id="WP_006477185.1">
    <property type="nucleotide sequence ID" value="NC_010551.1"/>
</dbReference>
<dbReference type="SMR" id="B1YRP3"/>
<dbReference type="GeneID" id="98107146"/>
<dbReference type="KEGG" id="bac:BamMC406_0290"/>
<dbReference type="HOGENOM" id="CLU_098428_0_0_4"/>
<dbReference type="OrthoDB" id="9802617at2"/>
<dbReference type="Proteomes" id="UP000001680">
    <property type="component" value="Chromosome 1"/>
</dbReference>
<dbReference type="GO" id="GO:1990904">
    <property type="term" value="C:ribonucleoprotein complex"/>
    <property type="evidence" value="ECO:0007669"/>
    <property type="project" value="UniProtKB-KW"/>
</dbReference>
<dbReference type="GO" id="GO:0005840">
    <property type="term" value="C:ribosome"/>
    <property type="evidence" value="ECO:0007669"/>
    <property type="project" value="UniProtKB-KW"/>
</dbReference>
<dbReference type="GO" id="GO:0019843">
    <property type="term" value="F:rRNA binding"/>
    <property type="evidence" value="ECO:0007669"/>
    <property type="project" value="UniProtKB-UniRule"/>
</dbReference>
<dbReference type="GO" id="GO:0003735">
    <property type="term" value="F:structural constituent of ribosome"/>
    <property type="evidence" value="ECO:0007669"/>
    <property type="project" value="InterPro"/>
</dbReference>
<dbReference type="GO" id="GO:0006412">
    <property type="term" value="P:translation"/>
    <property type="evidence" value="ECO:0007669"/>
    <property type="project" value="UniProtKB-UniRule"/>
</dbReference>
<dbReference type="FunFam" id="3.30.1370.30:FF:000003">
    <property type="entry name" value="30S ribosomal protein S8"/>
    <property type="match status" value="1"/>
</dbReference>
<dbReference type="FunFam" id="3.30.1490.10:FF:000001">
    <property type="entry name" value="30S ribosomal protein S8"/>
    <property type="match status" value="1"/>
</dbReference>
<dbReference type="Gene3D" id="3.30.1370.30">
    <property type="match status" value="1"/>
</dbReference>
<dbReference type="Gene3D" id="3.30.1490.10">
    <property type="match status" value="1"/>
</dbReference>
<dbReference type="HAMAP" id="MF_01302_B">
    <property type="entry name" value="Ribosomal_uS8_B"/>
    <property type="match status" value="1"/>
</dbReference>
<dbReference type="InterPro" id="IPR000630">
    <property type="entry name" value="Ribosomal_uS8"/>
</dbReference>
<dbReference type="InterPro" id="IPR047863">
    <property type="entry name" value="Ribosomal_uS8_CS"/>
</dbReference>
<dbReference type="InterPro" id="IPR035987">
    <property type="entry name" value="Ribosomal_uS8_sf"/>
</dbReference>
<dbReference type="NCBIfam" id="NF001109">
    <property type="entry name" value="PRK00136.1"/>
    <property type="match status" value="1"/>
</dbReference>
<dbReference type="PANTHER" id="PTHR11758">
    <property type="entry name" value="40S RIBOSOMAL PROTEIN S15A"/>
    <property type="match status" value="1"/>
</dbReference>
<dbReference type="Pfam" id="PF00410">
    <property type="entry name" value="Ribosomal_S8"/>
    <property type="match status" value="1"/>
</dbReference>
<dbReference type="SUPFAM" id="SSF56047">
    <property type="entry name" value="Ribosomal protein S8"/>
    <property type="match status" value="1"/>
</dbReference>
<dbReference type="PROSITE" id="PS00053">
    <property type="entry name" value="RIBOSOMAL_S8"/>
    <property type="match status" value="1"/>
</dbReference>
<keyword id="KW-0687">Ribonucleoprotein</keyword>
<keyword id="KW-0689">Ribosomal protein</keyword>
<keyword id="KW-0694">RNA-binding</keyword>
<keyword id="KW-0699">rRNA-binding</keyword>
<comment type="function">
    <text evidence="1">One of the primary rRNA binding proteins, it binds directly to 16S rRNA central domain where it helps coordinate assembly of the platform of the 30S subunit.</text>
</comment>
<comment type="subunit">
    <text evidence="1">Part of the 30S ribosomal subunit. Contacts proteins S5 and S12.</text>
</comment>
<comment type="similarity">
    <text evidence="1">Belongs to the universal ribosomal protein uS8 family.</text>
</comment>
<proteinExistence type="inferred from homology"/>
<gene>
    <name evidence="1" type="primary">rpsH</name>
    <name type="ordered locus">BamMC406_0290</name>
</gene>
<accession>B1YRP3</accession>
<evidence type="ECO:0000255" key="1">
    <source>
        <dbReference type="HAMAP-Rule" id="MF_01302"/>
    </source>
</evidence>
<evidence type="ECO:0000305" key="2"/>
<protein>
    <recommendedName>
        <fullName evidence="1">Small ribosomal subunit protein uS8</fullName>
    </recommendedName>
    <alternativeName>
        <fullName evidence="2">30S ribosomal protein S8</fullName>
    </alternativeName>
</protein>
<name>RS8_BURA4</name>